<proteinExistence type="inferred from homology"/>
<keyword id="KW-0413">Isomerase</keyword>
<keyword id="KW-0819">tRNA processing</keyword>
<sequence length="249" mass="28356">MVRYKATISYDGTLFSGFQRQRHLRTVQEEIEKTLYKLNNGTKIIIHGAGRTDAGVHAYGQVIHFDLPQEQEVEKLRFALDTQTPEDIDVVNIEKVADDFHCRYQKHLKTYEFLVDNGRPKNPMMRHYTTHYPYTLNIKLMQEAINGLVGTHDFTGFTAAGTSVQNKVRTITKATVSRDEKTDFLVFTFSGNGFLYKQVRNMVGTLLKIGNGQMPVEQVKVILSSKNRQLAGPTISGNGLYLKEICYEN</sequence>
<organism>
    <name type="scientific">Streptococcus pyogenes serotype M12 (strain MGAS9429)</name>
    <dbReference type="NCBI Taxonomy" id="370551"/>
    <lineage>
        <taxon>Bacteria</taxon>
        <taxon>Bacillati</taxon>
        <taxon>Bacillota</taxon>
        <taxon>Bacilli</taxon>
        <taxon>Lactobacillales</taxon>
        <taxon>Streptococcaceae</taxon>
        <taxon>Streptococcus</taxon>
    </lineage>
</organism>
<dbReference type="EC" id="5.4.99.12" evidence="1"/>
<dbReference type="EMBL" id="CP000259">
    <property type="protein sequence ID" value="ABF32807.1"/>
    <property type="molecule type" value="Genomic_DNA"/>
</dbReference>
<dbReference type="RefSeq" id="WP_002988132.1">
    <property type="nucleotide sequence ID" value="NC_008021.1"/>
</dbReference>
<dbReference type="SMR" id="Q1JK16"/>
<dbReference type="KEGG" id="spk:MGAS9429_Spy1620"/>
<dbReference type="HOGENOM" id="CLU_014673_0_1_9"/>
<dbReference type="Proteomes" id="UP000002433">
    <property type="component" value="Chromosome"/>
</dbReference>
<dbReference type="GO" id="GO:0003723">
    <property type="term" value="F:RNA binding"/>
    <property type="evidence" value="ECO:0007669"/>
    <property type="project" value="InterPro"/>
</dbReference>
<dbReference type="GO" id="GO:0160147">
    <property type="term" value="F:tRNA pseudouridine(38-40) synthase activity"/>
    <property type="evidence" value="ECO:0007669"/>
    <property type="project" value="UniProtKB-EC"/>
</dbReference>
<dbReference type="GO" id="GO:0031119">
    <property type="term" value="P:tRNA pseudouridine synthesis"/>
    <property type="evidence" value="ECO:0007669"/>
    <property type="project" value="UniProtKB-UniRule"/>
</dbReference>
<dbReference type="CDD" id="cd02570">
    <property type="entry name" value="PseudoU_synth_EcTruA"/>
    <property type="match status" value="1"/>
</dbReference>
<dbReference type="FunFam" id="3.30.70.580:FF:000001">
    <property type="entry name" value="tRNA pseudouridine synthase A"/>
    <property type="match status" value="1"/>
</dbReference>
<dbReference type="Gene3D" id="3.30.70.660">
    <property type="entry name" value="Pseudouridine synthase I, catalytic domain, C-terminal subdomain"/>
    <property type="match status" value="1"/>
</dbReference>
<dbReference type="Gene3D" id="3.30.70.580">
    <property type="entry name" value="Pseudouridine synthase I, catalytic domain, N-terminal subdomain"/>
    <property type="match status" value="1"/>
</dbReference>
<dbReference type="HAMAP" id="MF_00171">
    <property type="entry name" value="TruA"/>
    <property type="match status" value="1"/>
</dbReference>
<dbReference type="InterPro" id="IPR020103">
    <property type="entry name" value="PsdUridine_synth_cat_dom_sf"/>
</dbReference>
<dbReference type="InterPro" id="IPR001406">
    <property type="entry name" value="PsdUridine_synth_TruA"/>
</dbReference>
<dbReference type="InterPro" id="IPR020097">
    <property type="entry name" value="PsdUridine_synth_TruA_a/b_dom"/>
</dbReference>
<dbReference type="InterPro" id="IPR020095">
    <property type="entry name" value="PsdUridine_synth_TruA_C"/>
</dbReference>
<dbReference type="InterPro" id="IPR020094">
    <property type="entry name" value="TruA/RsuA/RluB/E/F_N"/>
</dbReference>
<dbReference type="NCBIfam" id="TIGR00071">
    <property type="entry name" value="hisT_truA"/>
    <property type="match status" value="1"/>
</dbReference>
<dbReference type="PANTHER" id="PTHR11142">
    <property type="entry name" value="PSEUDOURIDYLATE SYNTHASE"/>
    <property type="match status" value="1"/>
</dbReference>
<dbReference type="PANTHER" id="PTHR11142:SF0">
    <property type="entry name" value="TRNA PSEUDOURIDINE SYNTHASE-LIKE 1"/>
    <property type="match status" value="1"/>
</dbReference>
<dbReference type="Pfam" id="PF01416">
    <property type="entry name" value="PseudoU_synth_1"/>
    <property type="match status" value="2"/>
</dbReference>
<dbReference type="PIRSF" id="PIRSF001430">
    <property type="entry name" value="tRNA_psdUrid_synth"/>
    <property type="match status" value="1"/>
</dbReference>
<dbReference type="SUPFAM" id="SSF55120">
    <property type="entry name" value="Pseudouridine synthase"/>
    <property type="match status" value="1"/>
</dbReference>
<reference key="1">
    <citation type="journal article" date="2006" name="Proc. Natl. Acad. Sci. U.S.A.">
        <title>Molecular genetic anatomy of inter- and intraserotype variation in the human bacterial pathogen group A Streptococcus.</title>
        <authorList>
            <person name="Beres S.B."/>
            <person name="Richter E.W."/>
            <person name="Nagiec M.J."/>
            <person name="Sumby P."/>
            <person name="Porcella S.F."/>
            <person name="DeLeo F.R."/>
            <person name="Musser J.M."/>
        </authorList>
    </citation>
    <scope>NUCLEOTIDE SEQUENCE [LARGE SCALE GENOMIC DNA]</scope>
    <source>
        <strain>MGAS9429</strain>
    </source>
</reference>
<feature type="chain" id="PRO_1000017193" description="tRNA pseudouridine synthase A">
    <location>
        <begin position="1"/>
        <end position="249"/>
    </location>
</feature>
<feature type="active site" description="Nucleophile" evidence="1">
    <location>
        <position position="53"/>
    </location>
</feature>
<feature type="binding site" evidence="1">
    <location>
        <position position="111"/>
    </location>
    <ligand>
        <name>substrate</name>
    </ligand>
</feature>
<name>TRUA_STRPC</name>
<gene>
    <name evidence="1" type="primary">truA</name>
    <name type="ordered locus">MGAS9429_Spy1620</name>
</gene>
<evidence type="ECO:0000255" key="1">
    <source>
        <dbReference type="HAMAP-Rule" id="MF_00171"/>
    </source>
</evidence>
<protein>
    <recommendedName>
        <fullName evidence="1">tRNA pseudouridine synthase A</fullName>
        <ecNumber evidence="1">5.4.99.12</ecNumber>
    </recommendedName>
    <alternativeName>
        <fullName evidence="1">tRNA pseudouridine(38-40) synthase</fullName>
    </alternativeName>
    <alternativeName>
        <fullName evidence="1">tRNA pseudouridylate synthase I</fullName>
    </alternativeName>
    <alternativeName>
        <fullName evidence="1">tRNA-uridine isomerase I</fullName>
    </alternativeName>
</protein>
<comment type="function">
    <text evidence="1">Formation of pseudouridine at positions 38, 39 and 40 in the anticodon stem and loop of transfer RNAs.</text>
</comment>
<comment type="catalytic activity">
    <reaction evidence="1">
        <text>uridine(38/39/40) in tRNA = pseudouridine(38/39/40) in tRNA</text>
        <dbReference type="Rhea" id="RHEA:22376"/>
        <dbReference type="Rhea" id="RHEA-COMP:10085"/>
        <dbReference type="Rhea" id="RHEA-COMP:10087"/>
        <dbReference type="ChEBI" id="CHEBI:65314"/>
        <dbReference type="ChEBI" id="CHEBI:65315"/>
        <dbReference type="EC" id="5.4.99.12"/>
    </reaction>
</comment>
<comment type="subunit">
    <text evidence="1">Homodimer.</text>
</comment>
<comment type="similarity">
    <text evidence="1">Belongs to the tRNA pseudouridine synthase TruA family.</text>
</comment>
<accession>Q1JK16</accession>